<accession>Q01WA3</accession>
<keyword id="KW-0687">Ribonucleoprotein</keyword>
<keyword id="KW-0689">Ribosomal protein</keyword>
<keyword id="KW-0694">RNA-binding</keyword>
<keyword id="KW-0699">rRNA-binding</keyword>
<sequence length="123" mass="13655">MAIAKRKPAEPVRIELKKEDTVKVLTGRDKGKEGRVLAVNRETGKVLVEHVMMIKRHTRPNPGKQIKGGIAERESPINASNVLIVCPGCHKAVRIAHHIDKIAGGKARRTRVCRKCGQTLDRK</sequence>
<reference key="1">
    <citation type="journal article" date="2009" name="Appl. Environ. Microbiol.">
        <title>Three genomes from the phylum Acidobacteria provide insight into the lifestyles of these microorganisms in soils.</title>
        <authorList>
            <person name="Ward N.L."/>
            <person name="Challacombe J.F."/>
            <person name="Janssen P.H."/>
            <person name="Henrissat B."/>
            <person name="Coutinho P.M."/>
            <person name="Wu M."/>
            <person name="Xie G."/>
            <person name="Haft D.H."/>
            <person name="Sait M."/>
            <person name="Badger J."/>
            <person name="Barabote R.D."/>
            <person name="Bradley B."/>
            <person name="Brettin T.S."/>
            <person name="Brinkac L.M."/>
            <person name="Bruce D."/>
            <person name="Creasy T."/>
            <person name="Daugherty S.C."/>
            <person name="Davidsen T.M."/>
            <person name="DeBoy R.T."/>
            <person name="Detter J.C."/>
            <person name="Dodson R.J."/>
            <person name="Durkin A.S."/>
            <person name="Ganapathy A."/>
            <person name="Gwinn-Giglio M."/>
            <person name="Han C.S."/>
            <person name="Khouri H."/>
            <person name="Kiss H."/>
            <person name="Kothari S.P."/>
            <person name="Madupu R."/>
            <person name="Nelson K.E."/>
            <person name="Nelson W.C."/>
            <person name="Paulsen I."/>
            <person name="Penn K."/>
            <person name="Ren Q."/>
            <person name="Rosovitz M.J."/>
            <person name="Selengut J.D."/>
            <person name="Shrivastava S."/>
            <person name="Sullivan S.A."/>
            <person name="Tapia R."/>
            <person name="Thompson L.S."/>
            <person name="Watkins K.L."/>
            <person name="Yang Q."/>
            <person name="Yu C."/>
            <person name="Zafar N."/>
            <person name="Zhou L."/>
            <person name="Kuske C.R."/>
        </authorList>
    </citation>
    <scope>NUCLEOTIDE SEQUENCE [LARGE SCALE GENOMIC DNA]</scope>
    <source>
        <strain>Ellin6076</strain>
    </source>
</reference>
<organism>
    <name type="scientific">Solibacter usitatus (strain Ellin6076)</name>
    <dbReference type="NCBI Taxonomy" id="234267"/>
    <lineage>
        <taxon>Bacteria</taxon>
        <taxon>Pseudomonadati</taxon>
        <taxon>Acidobacteriota</taxon>
        <taxon>Terriglobia</taxon>
        <taxon>Bryobacterales</taxon>
        <taxon>Solibacteraceae</taxon>
        <taxon>Candidatus Solibacter</taxon>
    </lineage>
</organism>
<feature type="chain" id="PRO_0000355719" description="Large ribosomal subunit protein uL24">
    <location>
        <begin position="1"/>
        <end position="123"/>
    </location>
</feature>
<proteinExistence type="inferred from homology"/>
<comment type="function">
    <text evidence="1">One of two assembly initiator proteins, it binds directly to the 5'-end of the 23S rRNA, where it nucleates assembly of the 50S subunit.</text>
</comment>
<comment type="function">
    <text evidence="1">One of the proteins that surrounds the polypeptide exit tunnel on the outside of the subunit.</text>
</comment>
<comment type="subunit">
    <text evidence="1">Part of the 50S ribosomal subunit.</text>
</comment>
<comment type="similarity">
    <text evidence="1">Belongs to the universal ribosomal protein uL24 family.</text>
</comment>
<protein>
    <recommendedName>
        <fullName evidence="1">Large ribosomal subunit protein uL24</fullName>
    </recommendedName>
    <alternativeName>
        <fullName evidence="2">50S ribosomal protein L24</fullName>
    </alternativeName>
</protein>
<name>RL24_SOLUE</name>
<gene>
    <name evidence="1" type="primary">rplX</name>
    <name type="ordered locus">Acid_5107</name>
</gene>
<evidence type="ECO:0000255" key="1">
    <source>
        <dbReference type="HAMAP-Rule" id="MF_01326"/>
    </source>
</evidence>
<evidence type="ECO:0000305" key="2"/>
<dbReference type="EMBL" id="CP000473">
    <property type="protein sequence ID" value="ABJ86062.1"/>
    <property type="molecule type" value="Genomic_DNA"/>
</dbReference>
<dbReference type="SMR" id="Q01WA3"/>
<dbReference type="FunCoup" id="Q01WA3">
    <property type="interactions" value="638"/>
</dbReference>
<dbReference type="STRING" id="234267.Acid_5107"/>
<dbReference type="KEGG" id="sus:Acid_5107"/>
<dbReference type="eggNOG" id="COG0198">
    <property type="taxonomic scope" value="Bacteria"/>
</dbReference>
<dbReference type="HOGENOM" id="CLU_093315_2_3_0"/>
<dbReference type="InParanoid" id="Q01WA3"/>
<dbReference type="OrthoDB" id="9807419at2"/>
<dbReference type="GO" id="GO:1990904">
    <property type="term" value="C:ribonucleoprotein complex"/>
    <property type="evidence" value="ECO:0007669"/>
    <property type="project" value="UniProtKB-KW"/>
</dbReference>
<dbReference type="GO" id="GO:0005840">
    <property type="term" value="C:ribosome"/>
    <property type="evidence" value="ECO:0007669"/>
    <property type="project" value="UniProtKB-KW"/>
</dbReference>
<dbReference type="GO" id="GO:0019843">
    <property type="term" value="F:rRNA binding"/>
    <property type="evidence" value="ECO:0007669"/>
    <property type="project" value="UniProtKB-UniRule"/>
</dbReference>
<dbReference type="GO" id="GO:0003735">
    <property type="term" value="F:structural constituent of ribosome"/>
    <property type="evidence" value="ECO:0007669"/>
    <property type="project" value="InterPro"/>
</dbReference>
<dbReference type="GO" id="GO:0006412">
    <property type="term" value="P:translation"/>
    <property type="evidence" value="ECO:0007669"/>
    <property type="project" value="UniProtKB-UniRule"/>
</dbReference>
<dbReference type="CDD" id="cd06089">
    <property type="entry name" value="KOW_RPL26"/>
    <property type="match status" value="1"/>
</dbReference>
<dbReference type="Gene3D" id="2.30.30.30">
    <property type="match status" value="1"/>
</dbReference>
<dbReference type="HAMAP" id="MF_01326_B">
    <property type="entry name" value="Ribosomal_uL24_B"/>
    <property type="match status" value="1"/>
</dbReference>
<dbReference type="InterPro" id="IPR005824">
    <property type="entry name" value="KOW"/>
</dbReference>
<dbReference type="InterPro" id="IPR014722">
    <property type="entry name" value="Rib_uL2_dom2"/>
</dbReference>
<dbReference type="InterPro" id="IPR003256">
    <property type="entry name" value="Ribosomal_uL24"/>
</dbReference>
<dbReference type="InterPro" id="IPR005825">
    <property type="entry name" value="Ribosomal_uL24_CS"/>
</dbReference>
<dbReference type="InterPro" id="IPR041988">
    <property type="entry name" value="Ribosomal_uL24_KOW"/>
</dbReference>
<dbReference type="InterPro" id="IPR008991">
    <property type="entry name" value="Translation_prot_SH3-like_sf"/>
</dbReference>
<dbReference type="NCBIfam" id="TIGR01079">
    <property type="entry name" value="rplX_bact"/>
    <property type="match status" value="1"/>
</dbReference>
<dbReference type="PANTHER" id="PTHR12903">
    <property type="entry name" value="MITOCHONDRIAL RIBOSOMAL PROTEIN L24"/>
    <property type="match status" value="1"/>
</dbReference>
<dbReference type="Pfam" id="PF00467">
    <property type="entry name" value="KOW"/>
    <property type="match status" value="1"/>
</dbReference>
<dbReference type="Pfam" id="PF17136">
    <property type="entry name" value="ribosomal_L24"/>
    <property type="match status" value="1"/>
</dbReference>
<dbReference type="SMART" id="SM00739">
    <property type="entry name" value="KOW"/>
    <property type="match status" value="1"/>
</dbReference>
<dbReference type="SUPFAM" id="SSF50104">
    <property type="entry name" value="Translation proteins SH3-like domain"/>
    <property type="match status" value="1"/>
</dbReference>
<dbReference type="PROSITE" id="PS01108">
    <property type="entry name" value="RIBOSOMAL_L24"/>
    <property type="match status" value="1"/>
</dbReference>